<dbReference type="EMBL" id="CH964239">
    <property type="protein sequence ID" value="EDW81840.1"/>
    <property type="molecule type" value="Genomic_DNA"/>
</dbReference>
<dbReference type="SMR" id="B4NDL8"/>
<dbReference type="GlyCosmos" id="B4NDL8">
    <property type="glycosylation" value="3 sites, No reported glycans"/>
</dbReference>
<dbReference type="EnsemblMetazoa" id="FBtr0256124">
    <property type="protein sequence ID" value="FBpp0254616"/>
    <property type="gene ID" value="FBgn0227432"/>
</dbReference>
<dbReference type="EnsemblMetazoa" id="XM_002070818.4">
    <property type="protein sequence ID" value="XP_002070854.1"/>
    <property type="gene ID" value="LOC6648386"/>
</dbReference>
<dbReference type="GeneID" id="6648386"/>
<dbReference type="KEGG" id="dwi:6648386"/>
<dbReference type="CTD" id="31457"/>
<dbReference type="eggNOG" id="KOG3660">
    <property type="taxonomic scope" value="Eukaryota"/>
</dbReference>
<dbReference type="HOGENOM" id="CLU_006855_9_5_1"/>
<dbReference type="OMA" id="LQNFCDD"/>
<dbReference type="OrthoDB" id="6581954at2759"/>
<dbReference type="PhylomeDB" id="B4NDL8"/>
<dbReference type="Proteomes" id="UP000007798">
    <property type="component" value="Unassembled WGS sequence"/>
</dbReference>
<dbReference type="GO" id="GO:0005886">
    <property type="term" value="C:plasma membrane"/>
    <property type="evidence" value="ECO:0000305"/>
    <property type="project" value="UniProtKB"/>
</dbReference>
<dbReference type="GO" id="GO:0005283">
    <property type="term" value="F:amino acid:sodium symporter activity"/>
    <property type="evidence" value="ECO:0000250"/>
    <property type="project" value="UniProtKB"/>
</dbReference>
<dbReference type="GO" id="GO:0042943">
    <property type="term" value="F:D-amino acid transmembrane transporter activity"/>
    <property type="evidence" value="ECO:0000250"/>
    <property type="project" value="UniProtKB"/>
</dbReference>
<dbReference type="GO" id="GO:0015179">
    <property type="term" value="F:L-amino acid transmembrane transporter activity"/>
    <property type="evidence" value="ECO:0007669"/>
    <property type="project" value="TreeGrafter"/>
</dbReference>
<dbReference type="GO" id="GO:0015175">
    <property type="term" value="F:neutral L-amino acid transmembrane transporter activity"/>
    <property type="evidence" value="ECO:0000250"/>
    <property type="project" value="UniProtKB"/>
</dbReference>
<dbReference type="GO" id="GO:0089718">
    <property type="term" value="P:amino acid import across plasma membrane"/>
    <property type="evidence" value="ECO:0007669"/>
    <property type="project" value="TreeGrafter"/>
</dbReference>
<dbReference type="GO" id="GO:0042940">
    <property type="term" value="P:D-amino acid transport"/>
    <property type="evidence" value="ECO:0000250"/>
    <property type="project" value="UniProtKB"/>
</dbReference>
<dbReference type="GO" id="GO:0015804">
    <property type="term" value="P:neutral amino acid transport"/>
    <property type="evidence" value="ECO:0000250"/>
    <property type="project" value="UniProtKB"/>
</dbReference>
<dbReference type="GO" id="GO:0006814">
    <property type="term" value="P:sodium ion transport"/>
    <property type="evidence" value="ECO:0000250"/>
    <property type="project" value="UniProtKB"/>
</dbReference>
<dbReference type="CDD" id="cd10324">
    <property type="entry name" value="SLC6sbd"/>
    <property type="match status" value="1"/>
</dbReference>
<dbReference type="InterPro" id="IPR000175">
    <property type="entry name" value="Na/ntran_symport"/>
</dbReference>
<dbReference type="InterPro" id="IPR037272">
    <property type="entry name" value="SNS_sf"/>
</dbReference>
<dbReference type="PANTHER" id="PTHR11616:SF321">
    <property type="entry name" value="SODIUM-DEPENDENT NUTRIENT AMINO ACID TRANSPORTER 1-RELATED"/>
    <property type="match status" value="1"/>
</dbReference>
<dbReference type="PANTHER" id="PTHR11616">
    <property type="entry name" value="SODIUM/CHLORIDE DEPENDENT TRANSPORTER"/>
    <property type="match status" value="1"/>
</dbReference>
<dbReference type="Pfam" id="PF00209">
    <property type="entry name" value="SNF"/>
    <property type="match status" value="1"/>
</dbReference>
<dbReference type="PRINTS" id="PR00176">
    <property type="entry name" value="NANEUSMPORT"/>
</dbReference>
<dbReference type="SUPFAM" id="SSF161070">
    <property type="entry name" value="SNF-like"/>
    <property type="match status" value="1"/>
</dbReference>
<dbReference type="PROSITE" id="PS00610">
    <property type="entry name" value="NA_NEUROTRAN_SYMP_1"/>
    <property type="match status" value="1"/>
</dbReference>
<dbReference type="PROSITE" id="PS00754">
    <property type="entry name" value="NA_NEUROTRAN_SYMP_2"/>
    <property type="match status" value="1"/>
</dbReference>
<dbReference type="PROSITE" id="PS50267">
    <property type="entry name" value="NA_NEUROTRAN_SYMP_3"/>
    <property type="match status" value="1"/>
</dbReference>
<name>NAAT1_DROWI</name>
<evidence type="ECO:0000250" key="1"/>
<evidence type="ECO:0000250" key="2">
    <source>
        <dbReference type="UniProtKB" id="Q9W4C5"/>
    </source>
</evidence>
<evidence type="ECO:0000255" key="3"/>
<evidence type="ECO:0000256" key="4">
    <source>
        <dbReference type="SAM" id="MobiDB-lite"/>
    </source>
</evidence>
<evidence type="ECO:0000305" key="5"/>
<evidence type="ECO:0000312" key="6">
    <source>
        <dbReference type="EMBL" id="EDW81840.1"/>
    </source>
</evidence>
<comment type="function">
    <text evidence="1">Unusual broad substrate spectrum amino acid:sodium cotransporter that promotes absorption of the D isomers of essential amino acids. Neutral amino acids are the preferred substrates, especially methionine and phenylalanine (By similarity).</text>
</comment>
<comment type="subcellular location">
    <subcellularLocation>
        <location evidence="5">Membrane</location>
        <topology evidence="5">Multi-pass membrane protein</topology>
    </subcellularLocation>
</comment>
<comment type="similarity">
    <text evidence="5">Belongs to the sodium:neurotransmitter symporter (SNF) (TC 2.A.22) family.</text>
</comment>
<accession>B4NDL8</accession>
<organism>
    <name type="scientific">Drosophila willistoni</name>
    <name type="common">Fruit fly</name>
    <dbReference type="NCBI Taxonomy" id="7260"/>
    <lineage>
        <taxon>Eukaryota</taxon>
        <taxon>Metazoa</taxon>
        <taxon>Ecdysozoa</taxon>
        <taxon>Arthropoda</taxon>
        <taxon>Hexapoda</taxon>
        <taxon>Insecta</taxon>
        <taxon>Pterygota</taxon>
        <taxon>Neoptera</taxon>
        <taxon>Endopterygota</taxon>
        <taxon>Diptera</taxon>
        <taxon>Brachycera</taxon>
        <taxon>Muscomorpha</taxon>
        <taxon>Ephydroidea</taxon>
        <taxon>Drosophilidae</taxon>
        <taxon>Drosophila</taxon>
        <taxon>Sophophora</taxon>
    </lineage>
</organism>
<feature type="chain" id="PRO_0000386589" description="Sodium-dependent nutrient amino acid transporter 1">
    <location>
        <begin position="1"/>
        <end position="641"/>
    </location>
</feature>
<feature type="topological domain" description="Cytoplasmic" evidence="3">
    <location>
        <begin position="1"/>
        <end position="38"/>
    </location>
</feature>
<feature type="transmembrane region" description="Helical; Name=1" evidence="3">
    <location>
        <begin position="39"/>
        <end position="59"/>
    </location>
</feature>
<feature type="transmembrane region" description="Helical; Name=2" evidence="3">
    <location>
        <begin position="72"/>
        <end position="92"/>
    </location>
</feature>
<feature type="transmembrane region" description="Helical; Name=3" evidence="3">
    <location>
        <begin position="125"/>
        <end position="145"/>
    </location>
</feature>
<feature type="transmembrane region" description="Helical; Name=4" evidence="3">
    <location>
        <begin position="229"/>
        <end position="249"/>
    </location>
</feature>
<feature type="transmembrane region" description="Helical; Name=5" evidence="3">
    <location>
        <begin position="258"/>
        <end position="278"/>
    </location>
</feature>
<feature type="transmembrane region" description="Helical; Name=6" evidence="3">
    <location>
        <begin position="307"/>
        <end position="327"/>
    </location>
</feature>
<feature type="transmembrane region" description="Helical; Name=7" evidence="3">
    <location>
        <begin position="341"/>
        <end position="361"/>
    </location>
</feature>
<feature type="transmembrane region" description="Helical; Name=8" evidence="3">
    <location>
        <begin position="401"/>
        <end position="421"/>
    </location>
</feature>
<feature type="transmembrane region" description="Helical; Name=9" evidence="3">
    <location>
        <begin position="441"/>
        <end position="461"/>
    </location>
</feature>
<feature type="transmembrane region" description="Helical; Name=10" evidence="3">
    <location>
        <begin position="474"/>
        <end position="494"/>
    </location>
</feature>
<feature type="transmembrane region" description="Helical; Name=11" evidence="3">
    <location>
        <begin position="516"/>
        <end position="536"/>
    </location>
</feature>
<feature type="transmembrane region" description="Helical; Name=12" evidence="3">
    <location>
        <begin position="552"/>
        <end position="572"/>
    </location>
</feature>
<feature type="region of interest" description="Disordered" evidence="4">
    <location>
        <begin position="1"/>
        <end position="37"/>
    </location>
</feature>
<feature type="compositionally biased region" description="Polar residues" evidence="4">
    <location>
        <begin position="1"/>
        <end position="21"/>
    </location>
</feature>
<feature type="compositionally biased region" description="Basic and acidic residues" evidence="4">
    <location>
        <begin position="22"/>
        <end position="35"/>
    </location>
</feature>
<feature type="glycosylation site" description="N-linked (GlcNAc...) asparagine" evidence="3">
    <location>
        <position position="181"/>
    </location>
</feature>
<feature type="glycosylation site" description="N-linked (GlcNAc...) asparagine" evidence="3">
    <location>
        <position position="190"/>
    </location>
</feature>
<feature type="glycosylation site" description="N-linked (GlcNAc...) asparagine" evidence="3">
    <location>
        <position position="198"/>
    </location>
</feature>
<reference evidence="6" key="1">
    <citation type="journal article" date="2007" name="Nature">
        <title>Evolution of genes and genomes on the Drosophila phylogeny.</title>
        <authorList>
            <consortium name="Drosophila 12 genomes consortium"/>
        </authorList>
    </citation>
    <scope>NUCLEOTIDE SEQUENCE [LARGE SCALE GENOMIC DNA]</scope>
    <source>
        <strain evidence="6">Tucson 14030-0811.24</strain>
    </source>
</reference>
<protein>
    <recommendedName>
        <fullName evidence="2">Sodium-dependent nutrient amino acid transporter 1</fullName>
    </recommendedName>
</protein>
<proteinExistence type="inferred from homology"/>
<sequence>MELKNIEQQPQLQNGNGTATENNEKGEQKPTEGGERTNWGNGLEFLMSCISVSVGLGNVWRFPFTAYENGGGAFLIPYIIVLFLIGKPMYYLEMIIGQFTSQGSVKIWSICPSFLGVGYGQAFATVCIISYYSSLLALTLYYLFVSFQSVLPWSYCRDEWTNCVNSRPEDYSSTMLEAARNATSSLLIGNETTSLADNDSVQLQSSSELYFLNVVIKEKLDISDGVGAPDWKLTLALLVSWIVTFLVIMRGVKSSGKAAYFLAIFPYVVLFVLLGRAVTLEGAVDGIIFFLQPQWGELLNPTVWKEAVVQCFFSLAVSCGPIIMFASYNRFDHSIYRDAMIVTTLDTLTSLLGGITIFAILGNLAHNLQVDNIREVVRSGTGLAFISYPDAISKFQAVPQLFSVLFFFMLFVLGIGSIVALQSTIVTIICDQFKSWKYWKVALVTSICGFLLGLVYVTPGGQWILTLVDFYGGTYVVFILAIFELAGIVWIYGLQNFCDDIEFMCNKRVSLYWRVCWSFFTPVMMIIIFIYSMATIEPLKYSDLYFPLAGDIAGWIVFAIGTAQFPLWGIWYISHHRNGNLWQSFVSCLKPNENWGPANPETKQAWLLFKSEKARQRASKTQSSKMGQFWQKVGNFCGSST</sequence>
<gene>
    <name evidence="2" type="primary">NAAT1</name>
    <name type="ORF">GK25473</name>
</gene>
<keyword id="KW-0029">Amino-acid transport</keyword>
<keyword id="KW-0325">Glycoprotein</keyword>
<keyword id="KW-0406">Ion transport</keyword>
<keyword id="KW-0472">Membrane</keyword>
<keyword id="KW-1185">Reference proteome</keyword>
<keyword id="KW-0915">Sodium</keyword>
<keyword id="KW-0739">Sodium transport</keyword>
<keyword id="KW-0769">Symport</keyword>
<keyword id="KW-0812">Transmembrane</keyword>
<keyword id="KW-1133">Transmembrane helix</keyword>
<keyword id="KW-0813">Transport</keyword>